<feature type="chain" id="PRO_0000281954" description="F-box/LRR-repeat protein At3g48880">
    <location>
        <begin position="1"/>
        <end position="309"/>
    </location>
</feature>
<feature type="domain" description="F-box">
    <location>
        <begin position="10"/>
        <end position="57"/>
    </location>
</feature>
<feature type="repeat" description="LRR 1">
    <location>
        <begin position="77"/>
        <end position="107"/>
    </location>
</feature>
<feature type="repeat" description="LRR 2">
    <location>
        <begin position="108"/>
        <end position="133"/>
    </location>
</feature>
<feature type="repeat" description="LRR 3">
    <location>
        <begin position="159"/>
        <end position="184"/>
    </location>
</feature>
<feature type="repeat" description="LRR 4">
    <location>
        <begin position="208"/>
        <end position="233"/>
    </location>
</feature>
<feature type="sequence conflict" description="In Ref. 4; AAM67213." evidence="1" ref="4">
    <original>W</original>
    <variation>C</variation>
    <location>
        <position position="13"/>
    </location>
</feature>
<name>FBL53_ARATH</name>
<reference key="1">
    <citation type="journal article" date="2000" name="Nature">
        <title>Sequence and analysis of chromosome 3 of the plant Arabidopsis thaliana.</title>
        <authorList>
            <person name="Salanoubat M."/>
            <person name="Lemcke K."/>
            <person name="Rieger M."/>
            <person name="Ansorge W."/>
            <person name="Unseld M."/>
            <person name="Fartmann B."/>
            <person name="Valle G."/>
            <person name="Bloecker H."/>
            <person name="Perez-Alonso M."/>
            <person name="Obermaier B."/>
            <person name="Delseny M."/>
            <person name="Boutry M."/>
            <person name="Grivell L.A."/>
            <person name="Mache R."/>
            <person name="Puigdomenech P."/>
            <person name="De Simone V."/>
            <person name="Choisne N."/>
            <person name="Artiguenave F."/>
            <person name="Robert C."/>
            <person name="Brottier P."/>
            <person name="Wincker P."/>
            <person name="Cattolico L."/>
            <person name="Weissenbach J."/>
            <person name="Saurin W."/>
            <person name="Quetier F."/>
            <person name="Schaefer M."/>
            <person name="Mueller-Auer S."/>
            <person name="Gabel C."/>
            <person name="Fuchs M."/>
            <person name="Benes V."/>
            <person name="Wurmbach E."/>
            <person name="Drzonek H."/>
            <person name="Erfle H."/>
            <person name="Jordan N."/>
            <person name="Bangert S."/>
            <person name="Wiedelmann R."/>
            <person name="Kranz H."/>
            <person name="Voss H."/>
            <person name="Holland R."/>
            <person name="Brandt P."/>
            <person name="Nyakatura G."/>
            <person name="Vezzi A."/>
            <person name="D'Angelo M."/>
            <person name="Pallavicini A."/>
            <person name="Toppo S."/>
            <person name="Simionati B."/>
            <person name="Conrad A."/>
            <person name="Hornischer K."/>
            <person name="Kauer G."/>
            <person name="Loehnert T.-H."/>
            <person name="Nordsiek G."/>
            <person name="Reichelt J."/>
            <person name="Scharfe M."/>
            <person name="Schoen O."/>
            <person name="Bargues M."/>
            <person name="Terol J."/>
            <person name="Climent J."/>
            <person name="Navarro P."/>
            <person name="Collado C."/>
            <person name="Perez-Perez A."/>
            <person name="Ottenwaelder B."/>
            <person name="Duchemin D."/>
            <person name="Cooke R."/>
            <person name="Laudie M."/>
            <person name="Berger-Llauro C."/>
            <person name="Purnelle B."/>
            <person name="Masuy D."/>
            <person name="de Haan M."/>
            <person name="Maarse A.C."/>
            <person name="Alcaraz J.-P."/>
            <person name="Cottet A."/>
            <person name="Casacuberta E."/>
            <person name="Monfort A."/>
            <person name="Argiriou A."/>
            <person name="Flores M."/>
            <person name="Liguori R."/>
            <person name="Vitale D."/>
            <person name="Mannhaupt G."/>
            <person name="Haase D."/>
            <person name="Schoof H."/>
            <person name="Rudd S."/>
            <person name="Zaccaria P."/>
            <person name="Mewes H.-W."/>
            <person name="Mayer K.F.X."/>
            <person name="Kaul S."/>
            <person name="Town C.D."/>
            <person name="Koo H.L."/>
            <person name="Tallon L.J."/>
            <person name="Jenkins J."/>
            <person name="Rooney T."/>
            <person name="Rizzo M."/>
            <person name="Walts A."/>
            <person name="Utterback T."/>
            <person name="Fujii C.Y."/>
            <person name="Shea T.P."/>
            <person name="Creasy T.H."/>
            <person name="Haas B."/>
            <person name="Maiti R."/>
            <person name="Wu D."/>
            <person name="Peterson J."/>
            <person name="Van Aken S."/>
            <person name="Pai G."/>
            <person name="Militscher J."/>
            <person name="Sellers P."/>
            <person name="Gill J.E."/>
            <person name="Feldblyum T.V."/>
            <person name="Preuss D."/>
            <person name="Lin X."/>
            <person name="Nierman W.C."/>
            <person name="Salzberg S.L."/>
            <person name="White O."/>
            <person name="Venter J.C."/>
            <person name="Fraser C.M."/>
            <person name="Kaneko T."/>
            <person name="Nakamura Y."/>
            <person name="Sato S."/>
            <person name="Kato T."/>
            <person name="Asamizu E."/>
            <person name="Sasamoto S."/>
            <person name="Kimura T."/>
            <person name="Idesawa K."/>
            <person name="Kawashima K."/>
            <person name="Kishida Y."/>
            <person name="Kiyokawa C."/>
            <person name="Kohara M."/>
            <person name="Matsumoto M."/>
            <person name="Matsuno A."/>
            <person name="Muraki A."/>
            <person name="Nakayama S."/>
            <person name="Nakazaki N."/>
            <person name="Shinpo S."/>
            <person name="Takeuchi C."/>
            <person name="Wada T."/>
            <person name="Watanabe A."/>
            <person name="Yamada M."/>
            <person name="Yasuda M."/>
            <person name="Tabata S."/>
        </authorList>
    </citation>
    <scope>NUCLEOTIDE SEQUENCE [LARGE SCALE GENOMIC DNA]</scope>
    <source>
        <strain>cv. Columbia</strain>
    </source>
</reference>
<reference key="2">
    <citation type="journal article" date="2017" name="Plant J.">
        <title>Araport11: a complete reannotation of the Arabidopsis thaliana reference genome.</title>
        <authorList>
            <person name="Cheng C.Y."/>
            <person name="Krishnakumar V."/>
            <person name="Chan A.P."/>
            <person name="Thibaud-Nissen F."/>
            <person name="Schobel S."/>
            <person name="Town C.D."/>
        </authorList>
    </citation>
    <scope>GENOME REANNOTATION</scope>
    <source>
        <strain>cv. Columbia</strain>
    </source>
</reference>
<reference key="3">
    <citation type="journal article" date="2003" name="Science">
        <title>Empirical analysis of transcriptional activity in the Arabidopsis genome.</title>
        <authorList>
            <person name="Yamada K."/>
            <person name="Lim J."/>
            <person name="Dale J.M."/>
            <person name="Chen H."/>
            <person name="Shinn P."/>
            <person name="Palm C.J."/>
            <person name="Southwick A.M."/>
            <person name="Wu H.C."/>
            <person name="Kim C.J."/>
            <person name="Nguyen M."/>
            <person name="Pham P.K."/>
            <person name="Cheuk R.F."/>
            <person name="Karlin-Newmann G."/>
            <person name="Liu S.X."/>
            <person name="Lam B."/>
            <person name="Sakano H."/>
            <person name="Wu T."/>
            <person name="Yu G."/>
            <person name="Miranda M."/>
            <person name="Quach H.L."/>
            <person name="Tripp M."/>
            <person name="Chang C.H."/>
            <person name="Lee J.M."/>
            <person name="Toriumi M.J."/>
            <person name="Chan M.M."/>
            <person name="Tang C.C."/>
            <person name="Onodera C.S."/>
            <person name="Deng J.M."/>
            <person name="Akiyama K."/>
            <person name="Ansari Y."/>
            <person name="Arakawa T."/>
            <person name="Banh J."/>
            <person name="Banno F."/>
            <person name="Bowser L."/>
            <person name="Brooks S.Y."/>
            <person name="Carninci P."/>
            <person name="Chao Q."/>
            <person name="Choy N."/>
            <person name="Enju A."/>
            <person name="Goldsmith A.D."/>
            <person name="Gurjal M."/>
            <person name="Hansen N.F."/>
            <person name="Hayashizaki Y."/>
            <person name="Johnson-Hopson C."/>
            <person name="Hsuan V.W."/>
            <person name="Iida K."/>
            <person name="Karnes M."/>
            <person name="Khan S."/>
            <person name="Koesema E."/>
            <person name="Ishida J."/>
            <person name="Jiang P.X."/>
            <person name="Jones T."/>
            <person name="Kawai J."/>
            <person name="Kamiya A."/>
            <person name="Meyers C."/>
            <person name="Nakajima M."/>
            <person name="Narusaka M."/>
            <person name="Seki M."/>
            <person name="Sakurai T."/>
            <person name="Satou M."/>
            <person name="Tamse R."/>
            <person name="Vaysberg M."/>
            <person name="Wallender E.K."/>
            <person name="Wong C."/>
            <person name="Yamamura Y."/>
            <person name="Yuan S."/>
            <person name="Shinozaki K."/>
            <person name="Davis R.W."/>
            <person name="Theologis A."/>
            <person name="Ecker J.R."/>
        </authorList>
    </citation>
    <scope>NUCLEOTIDE SEQUENCE [LARGE SCALE MRNA]</scope>
    <source>
        <strain>cv. Columbia</strain>
    </source>
</reference>
<reference key="4">
    <citation type="submission" date="2002-03" db="EMBL/GenBank/DDBJ databases">
        <title>Full-length cDNA from Arabidopsis thaliana.</title>
        <authorList>
            <person name="Brover V.V."/>
            <person name="Troukhan M.E."/>
            <person name="Alexandrov N.A."/>
            <person name="Lu Y.-P."/>
            <person name="Flavell R.B."/>
            <person name="Feldmann K.A."/>
        </authorList>
    </citation>
    <scope>NUCLEOTIDE SEQUENCE [LARGE SCALE MRNA]</scope>
</reference>
<organism>
    <name type="scientific">Arabidopsis thaliana</name>
    <name type="common">Mouse-ear cress</name>
    <dbReference type="NCBI Taxonomy" id="3702"/>
    <lineage>
        <taxon>Eukaryota</taxon>
        <taxon>Viridiplantae</taxon>
        <taxon>Streptophyta</taxon>
        <taxon>Embryophyta</taxon>
        <taxon>Tracheophyta</taxon>
        <taxon>Spermatophyta</taxon>
        <taxon>Magnoliopsida</taxon>
        <taxon>eudicotyledons</taxon>
        <taxon>Gunneridae</taxon>
        <taxon>Pentapetalae</taxon>
        <taxon>rosids</taxon>
        <taxon>malvids</taxon>
        <taxon>Brassicales</taxon>
        <taxon>Brassicaceae</taxon>
        <taxon>Camelineae</taxon>
        <taxon>Arabidopsis</taxon>
    </lineage>
</organism>
<sequence length="309" mass="36062">MEEEYESRRLRRWEELDTDILVRIFQKFSVFELTSGLAHVCRGWRAACCDPILWKTVDLSNMRSSFIKIPLEPYVYVERRSDEALTRILKLSMNLSGGSTRTLIFHFNLFLSDDQLTYTAERCPGLRRVVLPAWNRIKKTGICKAIRIWKDLESLTMPSIANPPYLLTEIAKNCKNFKELKIMGPFEVFFANTLITCLPNIKTLSIRCSAIKREALMKILDGLPSLEVLNISHSHLVEYSGWQPQQKVIVRELDKTIMEKTARLKKFLTCMDHKTCVMCQRTENDEGIVRWYKYEEGDWKVDEVSSLHL</sequence>
<dbReference type="EMBL" id="AL132963">
    <property type="protein sequence ID" value="CAB87916.1"/>
    <property type="molecule type" value="Genomic_DNA"/>
</dbReference>
<dbReference type="EMBL" id="CP002686">
    <property type="protein sequence ID" value="AEE78468.1"/>
    <property type="molecule type" value="Genomic_DNA"/>
</dbReference>
<dbReference type="EMBL" id="CP002686">
    <property type="protein sequence ID" value="AEE78469.1"/>
    <property type="molecule type" value="Genomic_DNA"/>
</dbReference>
<dbReference type="EMBL" id="CP002686">
    <property type="protein sequence ID" value="ANM65909.1"/>
    <property type="molecule type" value="Genomic_DNA"/>
</dbReference>
<dbReference type="EMBL" id="AY045976">
    <property type="protein sequence ID" value="AAK76650.1"/>
    <property type="molecule type" value="mRNA"/>
</dbReference>
<dbReference type="EMBL" id="AY079352">
    <property type="protein sequence ID" value="AAL85083.1"/>
    <property type="molecule type" value="mRNA"/>
</dbReference>
<dbReference type="EMBL" id="AY088907">
    <property type="protein sequence ID" value="AAM67213.1"/>
    <property type="molecule type" value="mRNA"/>
</dbReference>
<dbReference type="PIR" id="T49284">
    <property type="entry name" value="T49284"/>
</dbReference>
<dbReference type="RefSeq" id="NP_001327846.1">
    <property type="nucleotide sequence ID" value="NM_001339387.1"/>
</dbReference>
<dbReference type="RefSeq" id="NP_190457.1">
    <property type="nucleotide sequence ID" value="NM_114747.5"/>
</dbReference>
<dbReference type="RefSeq" id="NP_850671.1">
    <property type="nucleotide sequence ID" value="NM_180340.3"/>
</dbReference>
<dbReference type="SMR" id="Q9M2Z5"/>
<dbReference type="BioGRID" id="9367">
    <property type="interactions" value="9"/>
</dbReference>
<dbReference type="FunCoup" id="Q9M2Z5">
    <property type="interactions" value="1036"/>
</dbReference>
<dbReference type="IntAct" id="Q9M2Z5">
    <property type="interactions" value="6"/>
</dbReference>
<dbReference type="STRING" id="3702.Q9M2Z5"/>
<dbReference type="PaxDb" id="3702-AT3G48880.1"/>
<dbReference type="ProteomicsDB" id="222515"/>
<dbReference type="EnsemblPlants" id="AT3G48880.1">
    <property type="protein sequence ID" value="AT3G48880.1"/>
    <property type="gene ID" value="AT3G48880"/>
</dbReference>
<dbReference type="EnsemblPlants" id="AT3G48880.2">
    <property type="protein sequence ID" value="AT3G48880.2"/>
    <property type="gene ID" value="AT3G48880"/>
</dbReference>
<dbReference type="EnsemblPlants" id="AT3G48880.3">
    <property type="protein sequence ID" value="AT3G48880.3"/>
    <property type="gene ID" value="AT3G48880"/>
</dbReference>
<dbReference type="GeneID" id="824049"/>
<dbReference type="Gramene" id="AT3G48880.1">
    <property type="protein sequence ID" value="AT3G48880.1"/>
    <property type="gene ID" value="AT3G48880"/>
</dbReference>
<dbReference type="Gramene" id="AT3G48880.2">
    <property type="protein sequence ID" value="AT3G48880.2"/>
    <property type="gene ID" value="AT3G48880"/>
</dbReference>
<dbReference type="Gramene" id="AT3G48880.3">
    <property type="protein sequence ID" value="AT3G48880.3"/>
    <property type="gene ID" value="AT3G48880"/>
</dbReference>
<dbReference type="KEGG" id="ath:AT3G48880"/>
<dbReference type="Araport" id="AT3G48880"/>
<dbReference type="TAIR" id="AT3G48880">
    <property type="gene designation" value="SNIPER4"/>
</dbReference>
<dbReference type="eggNOG" id="KOG1947">
    <property type="taxonomic scope" value="Eukaryota"/>
</dbReference>
<dbReference type="HOGENOM" id="CLU_050941_2_0_1"/>
<dbReference type="InParanoid" id="Q9M2Z5"/>
<dbReference type="OMA" id="AWRMACC"/>
<dbReference type="OrthoDB" id="722566at2759"/>
<dbReference type="PhylomeDB" id="Q9M2Z5"/>
<dbReference type="PRO" id="PR:Q9M2Z5"/>
<dbReference type="Proteomes" id="UP000006548">
    <property type="component" value="Chromosome 3"/>
</dbReference>
<dbReference type="ExpressionAtlas" id="Q9M2Z5">
    <property type="expression patterns" value="baseline and differential"/>
</dbReference>
<dbReference type="GO" id="GO:1905761">
    <property type="term" value="F:SCF ubiquitin ligase complex binding"/>
    <property type="evidence" value="ECO:0000353"/>
    <property type="project" value="TAIR"/>
</dbReference>
<dbReference type="GO" id="GO:0050829">
    <property type="term" value="P:defense response to Gram-negative bacterium"/>
    <property type="evidence" value="ECO:0000315"/>
    <property type="project" value="TAIR"/>
</dbReference>
<dbReference type="CDD" id="cd22142">
    <property type="entry name" value="F-box_ScDIA2-like"/>
    <property type="match status" value="1"/>
</dbReference>
<dbReference type="FunFam" id="1.20.1280.50:FF:000053">
    <property type="entry name" value="F-box/LRR-repeat protein At3g48880"/>
    <property type="match status" value="1"/>
</dbReference>
<dbReference type="Gene3D" id="1.20.1280.50">
    <property type="match status" value="1"/>
</dbReference>
<dbReference type="Gene3D" id="3.80.10.10">
    <property type="entry name" value="Ribonuclease Inhibitor"/>
    <property type="match status" value="1"/>
</dbReference>
<dbReference type="InterPro" id="IPR036047">
    <property type="entry name" value="F-box-like_dom_sf"/>
</dbReference>
<dbReference type="InterPro" id="IPR001810">
    <property type="entry name" value="F-box_dom"/>
</dbReference>
<dbReference type="InterPro" id="IPR032675">
    <property type="entry name" value="LRR_dom_sf"/>
</dbReference>
<dbReference type="PANTHER" id="PTHR38926">
    <property type="entry name" value="F-BOX DOMAIN CONTAINING PROTEIN, EXPRESSED"/>
    <property type="match status" value="1"/>
</dbReference>
<dbReference type="PANTHER" id="PTHR38926:SF13">
    <property type="entry name" value="F-BOX DOMAIN CONTAINING PROTEIN, EXPRESSED"/>
    <property type="match status" value="1"/>
</dbReference>
<dbReference type="Pfam" id="PF12937">
    <property type="entry name" value="F-box-like"/>
    <property type="match status" value="1"/>
</dbReference>
<dbReference type="SUPFAM" id="SSF81383">
    <property type="entry name" value="F-box domain"/>
    <property type="match status" value="1"/>
</dbReference>
<dbReference type="SUPFAM" id="SSF52047">
    <property type="entry name" value="RNI-like"/>
    <property type="match status" value="1"/>
</dbReference>
<proteinExistence type="evidence at transcript level"/>
<protein>
    <recommendedName>
        <fullName>F-box/LRR-repeat protein At3g48880</fullName>
    </recommendedName>
</protein>
<accession>Q9M2Z5</accession>
<accession>Q8L8M6</accession>
<gene>
    <name type="ordered locus">At3g48880</name>
    <name type="ORF">T21J18.150</name>
</gene>
<evidence type="ECO:0000305" key="1"/>
<keyword id="KW-0433">Leucine-rich repeat</keyword>
<keyword id="KW-1185">Reference proteome</keyword>
<keyword id="KW-0677">Repeat</keyword>